<protein>
    <recommendedName>
        <fullName>Probable 1,4-beta-D-glucan cellobiohydrolase B</fullName>
        <ecNumber>3.2.1.91</ecNumber>
    </recommendedName>
    <alternativeName>
        <fullName>Beta-glucancellobiohydrolase B</fullName>
    </alternativeName>
    <alternativeName>
        <fullName>Exocellobiohydrolase B</fullName>
    </alternativeName>
    <alternativeName>
        <fullName>Exoglucanase B</fullName>
    </alternativeName>
</protein>
<feature type="signal peptide" evidence="2">
    <location>
        <begin position="1"/>
        <end position="21"/>
    </location>
</feature>
<feature type="chain" id="PRO_5000219450" description="Probable 1,4-beta-D-glucan cellobiohydrolase B">
    <location>
        <begin position="22"/>
        <end position="536"/>
    </location>
</feature>
<feature type="domain" description="CBM1" evidence="3">
    <location>
        <begin position="500"/>
        <end position="536"/>
    </location>
</feature>
<feature type="region of interest" description="Catalytic">
    <location>
        <begin position="22"/>
        <end position="458"/>
    </location>
</feature>
<feature type="region of interest" description="Ser/Thr-rich linker">
    <location>
        <begin position="459"/>
        <end position="500"/>
    </location>
</feature>
<feature type="region of interest" description="Disordered" evidence="4">
    <location>
        <begin position="464"/>
        <end position="499"/>
    </location>
</feature>
<feature type="active site" description="Nucleophile" evidence="1">
    <location>
        <position position="233"/>
    </location>
</feature>
<feature type="active site" description="Proton donor" evidence="1">
    <location>
        <position position="238"/>
    </location>
</feature>
<feature type="glycosylation site" description="N-linked (GlcNAc...) asparagine" evidence="2">
    <location>
        <position position="351"/>
    </location>
</feature>
<feature type="glycosylation site" description="N-linked (GlcNAc...) asparagine" evidence="2">
    <location>
        <position position="414"/>
    </location>
</feature>
<feature type="disulfide bond" evidence="1">
    <location>
        <begin position="508"/>
        <end position="525"/>
    </location>
</feature>
<feature type="disulfide bond" evidence="1">
    <location>
        <begin position="519"/>
        <end position="535"/>
    </location>
</feature>
<reference key="1">
    <citation type="journal article" date="2007" name="Nat. Biotechnol.">
        <title>Genome sequencing and analysis of the versatile cell factory Aspergillus niger CBS 513.88.</title>
        <authorList>
            <person name="Pel H.J."/>
            <person name="de Winde J.H."/>
            <person name="Archer D.B."/>
            <person name="Dyer P.S."/>
            <person name="Hofmann G."/>
            <person name="Schaap P.J."/>
            <person name="Turner G."/>
            <person name="de Vries R.P."/>
            <person name="Albang R."/>
            <person name="Albermann K."/>
            <person name="Andersen M.R."/>
            <person name="Bendtsen J.D."/>
            <person name="Benen J.A.E."/>
            <person name="van den Berg M."/>
            <person name="Breestraat S."/>
            <person name="Caddick M.X."/>
            <person name="Contreras R."/>
            <person name="Cornell M."/>
            <person name="Coutinho P.M."/>
            <person name="Danchin E.G.J."/>
            <person name="Debets A.J.M."/>
            <person name="Dekker P."/>
            <person name="van Dijck P.W.M."/>
            <person name="van Dijk A."/>
            <person name="Dijkhuizen L."/>
            <person name="Driessen A.J.M."/>
            <person name="d'Enfert C."/>
            <person name="Geysens S."/>
            <person name="Goosen C."/>
            <person name="Groot G.S.P."/>
            <person name="de Groot P.W.J."/>
            <person name="Guillemette T."/>
            <person name="Henrissat B."/>
            <person name="Herweijer M."/>
            <person name="van den Hombergh J.P.T.W."/>
            <person name="van den Hondel C.A.M.J.J."/>
            <person name="van der Heijden R.T.J.M."/>
            <person name="van der Kaaij R.M."/>
            <person name="Klis F.M."/>
            <person name="Kools H.J."/>
            <person name="Kubicek C.P."/>
            <person name="van Kuyk P.A."/>
            <person name="Lauber J."/>
            <person name="Lu X."/>
            <person name="van der Maarel M.J.E.C."/>
            <person name="Meulenberg R."/>
            <person name="Menke H."/>
            <person name="Mortimer M.A."/>
            <person name="Nielsen J."/>
            <person name="Oliver S.G."/>
            <person name="Olsthoorn M."/>
            <person name="Pal K."/>
            <person name="van Peij N.N.M.E."/>
            <person name="Ram A.F.J."/>
            <person name="Rinas U."/>
            <person name="Roubos J.A."/>
            <person name="Sagt C.M.J."/>
            <person name="Schmoll M."/>
            <person name="Sun J."/>
            <person name="Ussery D."/>
            <person name="Varga J."/>
            <person name="Vervecken W."/>
            <person name="van de Vondervoort P.J.J."/>
            <person name="Wedler H."/>
            <person name="Woesten H.A.B."/>
            <person name="Zeng A.-P."/>
            <person name="van Ooyen A.J.J."/>
            <person name="Visser J."/>
            <person name="Stam H."/>
        </authorList>
    </citation>
    <scope>NUCLEOTIDE SEQUENCE [LARGE SCALE GENOMIC DNA]</scope>
    <source>
        <strain>ATCC MYA-4892 / CBS 513.88 / FGSC A1513</strain>
    </source>
</reference>
<gene>
    <name type="primary">cbhB</name>
    <name type="ORF">An01g11660</name>
</gene>
<sequence length="536" mass="56205">MSSFQVYRAALLLSILATANAQQVGTYTTETHPSLTWQTCTSDGSCTTNDGEVVIDANWRWVHSTSSATNCYTGNEWDTSICTDDVTCAANCALDGATYEATYGVTTSGSELRLNFVTQGSSKNIGSRLYLMSDDSNYELFKLLGQEFTFDVDVSNLPCGLNGALYFVAMDADGGTSEYSGNKAGAKYGTGYCDSQCPRDLKFINGEANCDGWEPSSNNVNTGVGDHGSCCAEMDVWEANSISNAFTAHPCDSVSQTMCDGDSCGGTYSASGDRYSGTCDPDGCDYNPYRLGNTDFYGPGLTVDTNSPFTVVTQFITDDGTSSGTLTEIKRLYVQNGEVIANGASTYSSVNGSSITSAFCESEKTLFGDENVFDKHGGLEGMGEAMAKGMVLVLSLWDDYAADMLWLDSDYPVNSSASTPGVARGTCSTDSGVPATVEAESPNAYVTYSNIKFGPIGSTYSSGSSSGSGSSSSSSSTTTKATSTTLKTTSTTSSGSSSTSAAQAYGQCGGQGWTGPTTCVSGYTCTYENAYYSQCL</sequence>
<evidence type="ECO:0000250" key="1"/>
<evidence type="ECO:0000255" key="2"/>
<evidence type="ECO:0000255" key="3">
    <source>
        <dbReference type="PROSITE-ProRule" id="PRU00597"/>
    </source>
</evidence>
<evidence type="ECO:0000256" key="4">
    <source>
        <dbReference type="SAM" id="MobiDB-lite"/>
    </source>
</evidence>
<evidence type="ECO:0000305" key="5"/>
<name>CBHB_ASPNC</name>
<accession>A2QAI7</accession>
<keyword id="KW-0119">Carbohydrate metabolism</keyword>
<keyword id="KW-0136">Cellulose degradation</keyword>
<keyword id="KW-1015">Disulfide bond</keyword>
<keyword id="KW-0325">Glycoprotein</keyword>
<keyword id="KW-0326">Glycosidase</keyword>
<keyword id="KW-0378">Hydrolase</keyword>
<keyword id="KW-0624">Polysaccharide degradation</keyword>
<keyword id="KW-1185">Reference proteome</keyword>
<keyword id="KW-0964">Secreted</keyword>
<keyword id="KW-0732">Signal</keyword>
<proteinExistence type="inferred from homology"/>
<organism>
    <name type="scientific">Aspergillus niger (strain ATCC MYA-4892 / CBS 513.88 / FGSC A1513)</name>
    <dbReference type="NCBI Taxonomy" id="425011"/>
    <lineage>
        <taxon>Eukaryota</taxon>
        <taxon>Fungi</taxon>
        <taxon>Dikarya</taxon>
        <taxon>Ascomycota</taxon>
        <taxon>Pezizomycotina</taxon>
        <taxon>Eurotiomycetes</taxon>
        <taxon>Eurotiomycetidae</taxon>
        <taxon>Eurotiales</taxon>
        <taxon>Aspergillaceae</taxon>
        <taxon>Aspergillus</taxon>
        <taxon>Aspergillus subgen. Circumdati</taxon>
    </lineage>
</organism>
<comment type="function">
    <text evidence="1">The biological conversion of cellulose to glucose generally requires three types of hydrolytic enzymes: (1) Endoglucanases which cut internal beta-1,4-glucosidic bonds; (2) Exocellobiohydrolases that cut the disaccharide cellobiose from the non-reducing end of the cellulose polymer chain; (3) Beta-1,4-glucosidases which hydrolyze the cellobiose and other short cello-oligosaccharides to glucose.</text>
</comment>
<comment type="catalytic activity">
    <reaction>
        <text>Hydrolysis of (1-&gt;4)-beta-D-glucosidic linkages in cellulose and cellotetraose, releasing cellobiose from the non-reducing ends of the chains.</text>
        <dbReference type="EC" id="3.2.1.91"/>
    </reaction>
</comment>
<comment type="subcellular location">
    <subcellularLocation>
        <location evidence="5">Secreted</location>
    </subcellularLocation>
</comment>
<comment type="similarity">
    <text evidence="5">Belongs to the glycosyl hydrolase 7 (cellulase C) family.</text>
</comment>
<dbReference type="EC" id="3.2.1.91"/>
<dbReference type="EMBL" id="AM269981">
    <property type="protein sequence ID" value="CAK44068.1"/>
    <property type="molecule type" value="Genomic_DNA"/>
</dbReference>
<dbReference type="RefSeq" id="XP_001389576.1">
    <property type="nucleotide sequence ID" value="XM_001389539.2"/>
</dbReference>
<dbReference type="SMR" id="A2QAI7"/>
<dbReference type="GlyCosmos" id="A2QAI7">
    <property type="glycosylation" value="2 sites, No reported glycans"/>
</dbReference>
<dbReference type="EnsemblFungi" id="CAK44068">
    <property type="protein sequence ID" value="CAK44068"/>
    <property type="gene ID" value="An01g11660"/>
</dbReference>
<dbReference type="GeneID" id="4977345"/>
<dbReference type="KEGG" id="ang:An01g11660"/>
<dbReference type="VEuPathDB" id="FungiDB:An01g11660"/>
<dbReference type="HOGENOM" id="CLU_020817_3_2_1"/>
<dbReference type="Proteomes" id="UP000006706">
    <property type="component" value="Chromosome 2R"/>
</dbReference>
<dbReference type="GO" id="GO:0005576">
    <property type="term" value="C:extracellular region"/>
    <property type="evidence" value="ECO:0007669"/>
    <property type="project" value="UniProtKB-SubCell"/>
</dbReference>
<dbReference type="GO" id="GO:0016162">
    <property type="term" value="F:cellulose 1,4-beta-cellobiosidase activity"/>
    <property type="evidence" value="ECO:0007669"/>
    <property type="project" value="UniProtKB-EC"/>
</dbReference>
<dbReference type="GO" id="GO:0030248">
    <property type="term" value="F:cellulose binding"/>
    <property type="evidence" value="ECO:0007669"/>
    <property type="project" value="InterPro"/>
</dbReference>
<dbReference type="GO" id="GO:0030245">
    <property type="term" value="P:cellulose catabolic process"/>
    <property type="evidence" value="ECO:0007669"/>
    <property type="project" value="UniProtKB-KW"/>
</dbReference>
<dbReference type="CDD" id="cd07999">
    <property type="entry name" value="GH7_CBH_EG"/>
    <property type="match status" value="1"/>
</dbReference>
<dbReference type="FunFam" id="2.70.100.10:FF:000001">
    <property type="entry name" value="Glucanase"/>
    <property type="match status" value="1"/>
</dbReference>
<dbReference type="Gene3D" id="2.70.100.10">
    <property type="entry name" value="Glycoside hydrolase, family 7, domain"/>
    <property type="match status" value="1"/>
</dbReference>
<dbReference type="InterPro" id="IPR035971">
    <property type="entry name" value="CBD_sf"/>
</dbReference>
<dbReference type="InterPro" id="IPR000254">
    <property type="entry name" value="Cellulose-bd_dom_fun"/>
</dbReference>
<dbReference type="InterPro" id="IPR013320">
    <property type="entry name" value="ConA-like_dom_sf"/>
</dbReference>
<dbReference type="InterPro" id="IPR001722">
    <property type="entry name" value="Glyco_hydro_7"/>
</dbReference>
<dbReference type="InterPro" id="IPR037019">
    <property type="entry name" value="Glyco_hydro_7_sf"/>
</dbReference>
<dbReference type="PANTHER" id="PTHR33753">
    <property type="entry name" value="1,4-BETA-D-GLUCAN CELLOBIOHYDROLASE B"/>
    <property type="match status" value="1"/>
</dbReference>
<dbReference type="PANTHER" id="PTHR33753:SF2">
    <property type="entry name" value="GLYCOSIDE HYDROLASE FAMILY 7 PROTEIN"/>
    <property type="match status" value="1"/>
</dbReference>
<dbReference type="Pfam" id="PF00734">
    <property type="entry name" value="CBM_1"/>
    <property type="match status" value="1"/>
</dbReference>
<dbReference type="Pfam" id="PF00840">
    <property type="entry name" value="Glyco_hydro_7"/>
    <property type="match status" value="1"/>
</dbReference>
<dbReference type="PRINTS" id="PR00734">
    <property type="entry name" value="GLHYDRLASE7"/>
</dbReference>
<dbReference type="SMART" id="SM00236">
    <property type="entry name" value="fCBD"/>
    <property type="match status" value="1"/>
</dbReference>
<dbReference type="SUPFAM" id="SSF57180">
    <property type="entry name" value="Cellulose-binding domain"/>
    <property type="match status" value="1"/>
</dbReference>
<dbReference type="SUPFAM" id="SSF49899">
    <property type="entry name" value="Concanavalin A-like lectins/glucanases"/>
    <property type="match status" value="1"/>
</dbReference>
<dbReference type="PROSITE" id="PS00562">
    <property type="entry name" value="CBM1_1"/>
    <property type="match status" value="1"/>
</dbReference>
<dbReference type="PROSITE" id="PS51164">
    <property type="entry name" value="CBM1_2"/>
    <property type="match status" value="1"/>
</dbReference>